<feature type="chain" id="PRO_0000068496" description="X polypeptide">
    <location>
        <begin position="1"/>
        <end position="169"/>
    </location>
</feature>
<name>X191_ECOLX</name>
<keyword id="KW-0614">Plasmid</keyword>
<geneLocation type="plasmid">
    <name>IncFII R100</name>
    <name>NR1</name>
</geneLocation>
<comment type="similarity">
    <text evidence="1">Belongs to the IagB/IpgF/P19 family.</text>
</comment>
<reference key="1">
    <citation type="journal article" date="1988" name="Nucleic Acids Res.">
        <title>Nucleotide sequence of gene X of antibiotic resistance plasmid R100.</title>
        <authorList>
            <person name="Fee B.E."/>
            <person name="Dempsey W.B."/>
        </authorList>
    </citation>
    <scope>NUCLEOTIDE SEQUENCE [GENOMIC DNA]</scope>
</reference>
<reference key="2">
    <citation type="journal article" date="1991" name="J. Biol. Chem.">
        <title>Site- and strand-specific nicking in vitro at oriT by the traY-traI endonuclease of plasmid R100.</title>
        <authorList>
            <person name="Inamoto S."/>
            <person name="Yoshioka Y."/>
            <person name="Ohtsubo E."/>
        </authorList>
    </citation>
    <scope>NUCLEOTIDE SEQUENCE [GENOMIC DNA] OF 1-16</scope>
</reference>
<accession>P14499</accession>
<organism>
    <name type="scientific">Escherichia coli</name>
    <dbReference type="NCBI Taxonomy" id="562"/>
    <lineage>
        <taxon>Bacteria</taxon>
        <taxon>Pseudomonadati</taxon>
        <taxon>Pseudomonadota</taxon>
        <taxon>Gammaproteobacteria</taxon>
        <taxon>Enterobacterales</taxon>
        <taxon>Enterobacteriaceae</taxon>
        <taxon>Escherichia</taxon>
    </lineage>
</organism>
<sequence>MKKWMLAICLMFINGICEAADCFDLAGRDYKIDPDLLRAISWKESRYRVNAIGINPVTGYGSGLMQVDSQHFNELARYGIKPEHLTTDPCMNIYTGAYYLAIAFKKWGVSWEAVGAYNAGFRKTERQNQRRLAYASEVYRIYTWIKSSKGIRVPTTKKSLSQINSVQKN</sequence>
<evidence type="ECO:0000305" key="1"/>
<protein>
    <recommendedName>
        <fullName>X polypeptide</fullName>
    </recommendedName>
    <alternativeName>
        <fullName>ORF 19</fullName>
    </alternativeName>
    <alternativeName>
        <fullName>ORF169</fullName>
    </alternativeName>
    <alternativeName>
        <fullName>P19 protein</fullName>
    </alternativeName>
</protein>
<proteinExistence type="inferred from homology"/>
<dbReference type="EMBL" id="X07264">
    <property type="protein sequence ID" value="CAA30250.1"/>
    <property type="molecule type" value="Genomic_DNA"/>
</dbReference>
<dbReference type="PIR" id="S00924">
    <property type="entry name" value="S00924"/>
</dbReference>
<dbReference type="RefSeq" id="NP_957596.1">
    <property type="nucleotide sequence ID" value="NC_005327.1"/>
</dbReference>
<dbReference type="RefSeq" id="WP_000759173.1">
    <property type="nucleotide sequence ID" value="NZ_WNUF01000024.1"/>
</dbReference>
<dbReference type="RefSeq" id="YP_001096464.1">
    <property type="nucleotide sequence ID" value="NC_009133.1"/>
</dbReference>
<dbReference type="RefSeq" id="YP_002456185.1">
    <property type="nucleotide sequence ID" value="NC_011812.1"/>
</dbReference>
<dbReference type="RefSeq" id="YP_006954265.1">
    <property type="nucleotide sequence ID" value="NC_019095.1"/>
</dbReference>
<dbReference type="SMR" id="P14499"/>
<dbReference type="CAZy" id="GH23">
    <property type="family name" value="Glycoside Hydrolase Family 23"/>
</dbReference>
<dbReference type="CDD" id="cd13400">
    <property type="entry name" value="LT_IagB-like"/>
    <property type="match status" value="1"/>
</dbReference>
<dbReference type="Gene3D" id="1.10.530.10">
    <property type="match status" value="1"/>
</dbReference>
<dbReference type="InterPro" id="IPR023346">
    <property type="entry name" value="Lysozyme-like_dom_sf"/>
</dbReference>
<dbReference type="InterPro" id="IPR008258">
    <property type="entry name" value="Transglycosylase_SLT_dom_1"/>
</dbReference>
<dbReference type="Pfam" id="PF01464">
    <property type="entry name" value="SLT"/>
    <property type="match status" value="1"/>
</dbReference>
<dbReference type="SUPFAM" id="SSF53955">
    <property type="entry name" value="Lysozyme-like"/>
    <property type="match status" value="1"/>
</dbReference>
<gene>
    <name type="primary">X</name>
    <name type="synonym">19</name>
</gene>